<protein>
    <recommendedName>
        <fullName evidence="2">tRNA (guanine-N(7)-)-methyltransferase</fullName>
        <ecNumber evidence="2">2.1.1.33</ecNumber>
    </recommendedName>
    <alternativeName>
        <fullName evidence="2">tRNA (guanine(46)-N(7))-methyltransferase</fullName>
    </alternativeName>
    <alternativeName>
        <fullName evidence="2">tRNA(m7G46)-methyltransferase</fullName>
    </alternativeName>
</protein>
<dbReference type="EC" id="2.1.1.33" evidence="2"/>
<dbReference type="EMBL" id="DQ489736">
    <property type="protein sequence ID" value="ACA82899.1"/>
    <property type="molecule type" value="Genomic_DNA"/>
</dbReference>
<dbReference type="RefSeq" id="WP_004907667.1">
    <property type="nucleotide sequence ID" value="NC_010471.1"/>
</dbReference>
<dbReference type="SMR" id="B1MZE7"/>
<dbReference type="STRING" id="349519.LCK_01072"/>
<dbReference type="KEGG" id="lci:LCK_01072"/>
<dbReference type="eggNOG" id="COG0220">
    <property type="taxonomic scope" value="Bacteria"/>
</dbReference>
<dbReference type="HOGENOM" id="CLU_050910_2_1_9"/>
<dbReference type="OrthoDB" id="9802090at2"/>
<dbReference type="UniPathway" id="UPA00989"/>
<dbReference type="Proteomes" id="UP000002166">
    <property type="component" value="Chromosome"/>
</dbReference>
<dbReference type="GO" id="GO:0043527">
    <property type="term" value="C:tRNA methyltransferase complex"/>
    <property type="evidence" value="ECO:0007669"/>
    <property type="project" value="TreeGrafter"/>
</dbReference>
<dbReference type="GO" id="GO:0008176">
    <property type="term" value="F:tRNA (guanine(46)-N7)-methyltransferase activity"/>
    <property type="evidence" value="ECO:0007669"/>
    <property type="project" value="UniProtKB-UniRule"/>
</dbReference>
<dbReference type="FunFam" id="3.40.50.150:FF:000035">
    <property type="entry name" value="tRNA (guanine-N(7)-)-methyltransferase"/>
    <property type="match status" value="1"/>
</dbReference>
<dbReference type="Gene3D" id="3.40.50.150">
    <property type="entry name" value="Vaccinia Virus protein VP39"/>
    <property type="match status" value="1"/>
</dbReference>
<dbReference type="HAMAP" id="MF_01057">
    <property type="entry name" value="tRNA_methyltr_TrmB"/>
    <property type="match status" value="1"/>
</dbReference>
<dbReference type="InterPro" id="IPR029063">
    <property type="entry name" value="SAM-dependent_MTases_sf"/>
</dbReference>
<dbReference type="InterPro" id="IPR003358">
    <property type="entry name" value="tRNA_(Gua-N-7)_MeTrfase_Trmb"/>
</dbReference>
<dbReference type="InterPro" id="IPR055361">
    <property type="entry name" value="tRNA_methyltr_TrmB_bact"/>
</dbReference>
<dbReference type="NCBIfam" id="NF001080">
    <property type="entry name" value="PRK00121.2-2"/>
    <property type="match status" value="1"/>
</dbReference>
<dbReference type="NCBIfam" id="TIGR00091">
    <property type="entry name" value="tRNA (guanosine(46)-N7)-methyltransferase TrmB"/>
    <property type="match status" value="1"/>
</dbReference>
<dbReference type="PANTHER" id="PTHR23417">
    <property type="entry name" value="3-DEOXY-D-MANNO-OCTULOSONIC-ACID TRANSFERASE/TRNA GUANINE-N 7 - -METHYLTRANSFERASE"/>
    <property type="match status" value="1"/>
</dbReference>
<dbReference type="PANTHER" id="PTHR23417:SF14">
    <property type="entry name" value="PENTACOTRIPEPTIDE-REPEAT REGION OF PRORP DOMAIN-CONTAINING PROTEIN"/>
    <property type="match status" value="1"/>
</dbReference>
<dbReference type="Pfam" id="PF02390">
    <property type="entry name" value="Methyltransf_4"/>
    <property type="match status" value="1"/>
</dbReference>
<dbReference type="SUPFAM" id="SSF53335">
    <property type="entry name" value="S-adenosyl-L-methionine-dependent methyltransferases"/>
    <property type="match status" value="1"/>
</dbReference>
<dbReference type="PROSITE" id="PS51625">
    <property type="entry name" value="SAM_MT_TRMB"/>
    <property type="match status" value="1"/>
</dbReference>
<evidence type="ECO:0000250" key="1"/>
<evidence type="ECO:0000255" key="2">
    <source>
        <dbReference type="HAMAP-Rule" id="MF_01057"/>
    </source>
</evidence>
<accession>B1MZE7</accession>
<gene>
    <name evidence="2" type="primary">trmB</name>
    <name type="ordered locus">LCK_01072</name>
</gene>
<keyword id="KW-0489">Methyltransferase</keyword>
<keyword id="KW-1185">Reference proteome</keyword>
<keyword id="KW-0949">S-adenosyl-L-methionine</keyword>
<keyword id="KW-0808">Transferase</keyword>
<keyword id="KW-0819">tRNA processing</keyword>
<sequence>MHLRAKPWATDWLAAHSDIVITQGRATEQIGQWQKLFAKAQPIHVEIGSGKGQFILGMALAHPEINYIGMEIQETAVAIAARKSFDQVGELPNLRYIYGNGNGVETYFEKAEVEKIYLNFSDPWPKTRHESRRLTYKTFLQSYEAVLPEHGEVEFKTDNRHLFEYSIVSFMNYGMRWATTDFTLDLHADAEKVIGNVETEYEQKFMAKGQPIYKIKAHF</sequence>
<organism>
    <name type="scientific">Leuconostoc citreum (strain KM20)</name>
    <dbReference type="NCBI Taxonomy" id="349519"/>
    <lineage>
        <taxon>Bacteria</taxon>
        <taxon>Bacillati</taxon>
        <taxon>Bacillota</taxon>
        <taxon>Bacilli</taxon>
        <taxon>Lactobacillales</taxon>
        <taxon>Lactobacillaceae</taxon>
        <taxon>Leuconostoc</taxon>
    </lineage>
</organism>
<proteinExistence type="inferred from homology"/>
<name>TRMB_LEUCK</name>
<reference key="1">
    <citation type="journal article" date="2008" name="J. Bacteriol.">
        <title>Complete genome sequence of Leuconostoc citreum KM20.</title>
        <authorList>
            <person name="Kim J.F."/>
            <person name="Jeong H."/>
            <person name="Lee J.-S."/>
            <person name="Choi S.-H."/>
            <person name="Ha M."/>
            <person name="Hur C.-G."/>
            <person name="Kim J.-S."/>
            <person name="Lee S."/>
            <person name="Park H.-S."/>
            <person name="Park Y.-H."/>
            <person name="Oh T.K."/>
        </authorList>
    </citation>
    <scope>NUCLEOTIDE SEQUENCE [LARGE SCALE GENOMIC DNA]</scope>
    <source>
        <strain>KM20</strain>
    </source>
</reference>
<feature type="chain" id="PRO_1000136354" description="tRNA (guanine-N(7)-)-methyltransferase">
    <location>
        <begin position="1"/>
        <end position="219"/>
    </location>
</feature>
<feature type="active site" evidence="1">
    <location>
        <position position="122"/>
    </location>
</feature>
<feature type="binding site" evidence="2">
    <location>
        <position position="46"/>
    </location>
    <ligand>
        <name>S-adenosyl-L-methionine</name>
        <dbReference type="ChEBI" id="CHEBI:59789"/>
    </ligand>
</feature>
<feature type="binding site" evidence="2">
    <location>
        <position position="71"/>
    </location>
    <ligand>
        <name>S-adenosyl-L-methionine</name>
        <dbReference type="ChEBI" id="CHEBI:59789"/>
    </ligand>
</feature>
<feature type="binding site" evidence="2">
    <location>
        <position position="100"/>
    </location>
    <ligand>
        <name>S-adenosyl-L-methionine</name>
        <dbReference type="ChEBI" id="CHEBI:59789"/>
    </ligand>
</feature>
<feature type="binding site" evidence="2">
    <location>
        <position position="122"/>
    </location>
    <ligand>
        <name>S-adenosyl-L-methionine</name>
        <dbReference type="ChEBI" id="CHEBI:59789"/>
    </ligand>
</feature>
<feature type="binding site" evidence="2">
    <location>
        <position position="126"/>
    </location>
    <ligand>
        <name>substrate</name>
    </ligand>
</feature>
<feature type="binding site" evidence="2">
    <location>
        <position position="158"/>
    </location>
    <ligand>
        <name>substrate</name>
    </ligand>
</feature>
<feature type="binding site" evidence="2">
    <location>
        <begin position="199"/>
        <end position="202"/>
    </location>
    <ligand>
        <name>substrate</name>
    </ligand>
</feature>
<comment type="function">
    <text evidence="2">Catalyzes the formation of N(7)-methylguanine at position 46 (m7G46) in tRNA.</text>
</comment>
<comment type="catalytic activity">
    <reaction evidence="2">
        <text>guanosine(46) in tRNA + S-adenosyl-L-methionine = N(7)-methylguanosine(46) in tRNA + S-adenosyl-L-homocysteine</text>
        <dbReference type="Rhea" id="RHEA:42708"/>
        <dbReference type="Rhea" id="RHEA-COMP:10188"/>
        <dbReference type="Rhea" id="RHEA-COMP:10189"/>
        <dbReference type="ChEBI" id="CHEBI:57856"/>
        <dbReference type="ChEBI" id="CHEBI:59789"/>
        <dbReference type="ChEBI" id="CHEBI:74269"/>
        <dbReference type="ChEBI" id="CHEBI:74480"/>
        <dbReference type="EC" id="2.1.1.33"/>
    </reaction>
</comment>
<comment type="pathway">
    <text evidence="2">tRNA modification; N(7)-methylguanine-tRNA biosynthesis.</text>
</comment>
<comment type="similarity">
    <text evidence="2">Belongs to the class I-like SAM-binding methyltransferase superfamily. TrmB family.</text>
</comment>